<evidence type="ECO:0000255" key="1">
    <source>
        <dbReference type="HAMAP-Rule" id="MF_01631"/>
    </source>
</evidence>
<protein>
    <recommendedName>
        <fullName evidence="1">Bifunctional protein GlmU</fullName>
    </recommendedName>
    <domain>
        <recommendedName>
            <fullName evidence="1">UDP-N-acetylglucosamine pyrophosphorylase</fullName>
            <ecNumber evidence="1">2.7.7.23</ecNumber>
        </recommendedName>
        <alternativeName>
            <fullName evidence="1">N-acetylglucosamine-1-phosphate uridyltransferase</fullName>
        </alternativeName>
    </domain>
    <domain>
        <recommendedName>
            <fullName evidence="1">Glucosamine-1-phosphate N-acetyltransferase</fullName>
            <ecNumber evidence="1">2.3.1.157</ecNumber>
        </recommendedName>
    </domain>
</protein>
<name>GLMU_OLEA2</name>
<dbReference type="EC" id="2.7.7.23" evidence="1"/>
<dbReference type="EC" id="2.3.1.157" evidence="1"/>
<dbReference type="EMBL" id="CP000112">
    <property type="protein sequence ID" value="ABB37782.1"/>
    <property type="molecule type" value="Genomic_DNA"/>
</dbReference>
<dbReference type="RefSeq" id="WP_011367025.1">
    <property type="nucleotide sequence ID" value="NC_007519.1"/>
</dbReference>
<dbReference type="SMR" id="Q313W4"/>
<dbReference type="STRING" id="207559.Dde_0981"/>
<dbReference type="KEGG" id="dde:Dde_0981"/>
<dbReference type="eggNOG" id="COG1207">
    <property type="taxonomic scope" value="Bacteria"/>
</dbReference>
<dbReference type="HOGENOM" id="CLU_029499_15_2_7"/>
<dbReference type="UniPathway" id="UPA00113">
    <property type="reaction ID" value="UER00532"/>
</dbReference>
<dbReference type="UniPathway" id="UPA00113">
    <property type="reaction ID" value="UER00533"/>
</dbReference>
<dbReference type="UniPathway" id="UPA00973"/>
<dbReference type="Proteomes" id="UP000002710">
    <property type="component" value="Chromosome"/>
</dbReference>
<dbReference type="GO" id="GO:0005737">
    <property type="term" value="C:cytoplasm"/>
    <property type="evidence" value="ECO:0007669"/>
    <property type="project" value="UniProtKB-SubCell"/>
</dbReference>
<dbReference type="GO" id="GO:0016020">
    <property type="term" value="C:membrane"/>
    <property type="evidence" value="ECO:0007669"/>
    <property type="project" value="GOC"/>
</dbReference>
<dbReference type="GO" id="GO:0019134">
    <property type="term" value="F:glucosamine-1-phosphate N-acetyltransferase activity"/>
    <property type="evidence" value="ECO:0007669"/>
    <property type="project" value="UniProtKB-UniRule"/>
</dbReference>
<dbReference type="GO" id="GO:0000287">
    <property type="term" value="F:magnesium ion binding"/>
    <property type="evidence" value="ECO:0007669"/>
    <property type="project" value="UniProtKB-UniRule"/>
</dbReference>
<dbReference type="GO" id="GO:0003977">
    <property type="term" value="F:UDP-N-acetylglucosamine diphosphorylase activity"/>
    <property type="evidence" value="ECO:0007669"/>
    <property type="project" value="UniProtKB-UniRule"/>
</dbReference>
<dbReference type="GO" id="GO:0000902">
    <property type="term" value="P:cell morphogenesis"/>
    <property type="evidence" value="ECO:0007669"/>
    <property type="project" value="UniProtKB-UniRule"/>
</dbReference>
<dbReference type="GO" id="GO:0071555">
    <property type="term" value="P:cell wall organization"/>
    <property type="evidence" value="ECO:0007669"/>
    <property type="project" value="UniProtKB-KW"/>
</dbReference>
<dbReference type="GO" id="GO:0009245">
    <property type="term" value="P:lipid A biosynthetic process"/>
    <property type="evidence" value="ECO:0007669"/>
    <property type="project" value="UniProtKB-UniRule"/>
</dbReference>
<dbReference type="GO" id="GO:0009252">
    <property type="term" value="P:peptidoglycan biosynthetic process"/>
    <property type="evidence" value="ECO:0007669"/>
    <property type="project" value="UniProtKB-UniRule"/>
</dbReference>
<dbReference type="GO" id="GO:0008360">
    <property type="term" value="P:regulation of cell shape"/>
    <property type="evidence" value="ECO:0007669"/>
    <property type="project" value="UniProtKB-KW"/>
</dbReference>
<dbReference type="GO" id="GO:0006048">
    <property type="term" value="P:UDP-N-acetylglucosamine biosynthetic process"/>
    <property type="evidence" value="ECO:0007669"/>
    <property type="project" value="UniProtKB-UniPathway"/>
</dbReference>
<dbReference type="CDD" id="cd02540">
    <property type="entry name" value="GT2_GlmU_N_bac"/>
    <property type="match status" value="1"/>
</dbReference>
<dbReference type="CDD" id="cd03353">
    <property type="entry name" value="LbH_GlmU_C"/>
    <property type="match status" value="1"/>
</dbReference>
<dbReference type="Gene3D" id="2.160.10.10">
    <property type="entry name" value="Hexapeptide repeat proteins"/>
    <property type="match status" value="1"/>
</dbReference>
<dbReference type="Gene3D" id="3.90.550.10">
    <property type="entry name" value="Spore Coat Polysaccharide Biosynthesis Protein SpsA, Chain A"/>
    <property type="match status" value="1"/>
</dbReference>
<dbReference type="HAMAP" id="MF_01631">
    <property type="entry name" value="GlmU"/>
    <property type="match status" value="1"/>
</dbReference>
<dbReference type="InterPro" id="IPR005882">
    <property type="entry name" value="Bifunctional_GlmU"/>
</dbReference>
<dbReference type="InterPro" id="IPR050065">
    <property type="entry name" value="GlmU-like"/>
</dbReference>
<dbReference type="InterPro" id="IPR038009">
    <property type="entry name" value="GlmU_C_LbH"/>
</dbReference>
<dbReference type="InterPro" id="IPR001451">
    <property type="entry name" value="Hexapep"/>
</dbReference>
<dbReference type="InterPro" id="IPR018357">
    <property type="entry name" value="Hexapep_transf_CS"/>
</dbReference>
<dbReference type="InterPro" id="IPR025877">
    <property type="entry name" value="MobA-like_NTP_Trfase"/>
</dbReference>
<dbReference type="InterPro" id="IPR029044">
    <property type="entry name" value="Nucleotide-diphossugar_trans"/>
</dbReference>
<dbReference type="InterPro" id="IPR011004">
    <property type="entry name" value="Trimer_LpxA-like_sf"/>
</dbReference>
<dbReference type="NCBIfam" id="TIGR01173">
    <property type="entry name" value="glmU"/>
    <property type="match status" value="1"/>
</dbReference>
<dbReference type="NCBIfam" id="NF010936">
    <property type="entry name" value="PRK14356.1"/>
    <property type="match status" value="1"/>
</dbReference>
<dbReference type="PANTHER" id="PTHR43584:SF3">
    <property type="entry name" value="BIFUNCTIONAL PROTEIN GLMU"/>
    <property type="match status" value="1"/>
</dbReference>
<dbReference type="PANTHER" id="PTHR43584">
    <property type="entry name" value="NUCLEOTIDYL TRANSFERASE"/>
    <property type="match status" value="1"/>
</dbReference>
<dbReference type="Pfam" id="PF00132">
    <property type="entry name" value="Hexapep"/>
    <property type="match status" value="1"/>
</dbReference>
<dbReference type="Pfam" id="PF12804">
    <property type="entry name" value="NTP_transf_3"/>
    <property type="match status" value="1"/>
</dbReference>
<dbReference type="SUPFAM" id="SSF53448">
    <property type="entry name" value="Nucleotide-diphospho-sugar transferases"/>
    <property type="match status" value="1"/>
</dbReference>
<dbReference type="SUPFAM" id="SSF51161">
    <property type="entry name" value="Trimeric LpxA-like enzymes"/>
    <property type="match status" value="1"/>
</dbReference>
<dbReference type="PROSITE" id="PS00101">
    <property type="entry name" value="HEXAPEP_TRANSFERASES"/>
    <property type="match status" value="1"/>
</dbReference>
<accession>Q313W4</accession>
<gene>
    <name evidence="1" type="primary">glmU</name>
    <name type="ordered locus">Dde_0981</name>
</gene>
<comment type="function">
    <text evidence="1">Catalyzes the last two sequential reactions in the de novo biosynthetic pathway for UDP-N-acetylglucosamine (UDP-GlcNAc). The C-terminal domain catalyzes the transfer of acetyl group from acetyl coenzyme A to glucosamine-1-phosphate (GlcN-1-P) to produce N-acetylglucosamine-1-phosphate (GlcNAc-1-P), which is converted into UDP-GlcNAc by the transfer of uridine 5-monophosphate (from uridine 5-triphosphate), a reaction catalyzed by the N-terminal domain.</text>
</comment>
<comment type="catalytic activity">
    <reaction evidence="1">
        <text>alpha-D-glucosamine 1-phosphate + acetyl-CoA = N-acetyl-alpha-D-glucosamine 1-phosphate + CoA + H(+)</text>
        <dbReference type="Rhea" id="RHEA:13725"/>
        <dbReference type="ChEBI" id="CHEBI:15378"/>
        <dbReference type="ChEBI" id="CHEBI:57287"/>
        <dbReference type="ChEBI" id="CHEBI:57288"/>
        <dbReference type="ChEBI" id="CHEBI:57776"/>
        <dbReference type="ChEBI" id="CHEBI:58516"/>
        <dbReference type="EC" id="2.3.1.157"/>
    </reaction>
</comment>
<comment type="catalytic activity">
    <reaction evidence="1">
        <text>N-acetyl-alpha-D-glucosamine 1-phosphate + UTP + H(+) = UDP-N-acetyl-alpha-D-glucosamine + diphosphate</text>
        <dbReference type="Rhea" id="RHEA:13509"/>
        <dbReference type="ChEBI" id="CHEBI:15378"/>
        <dbReference type="ChEBI" id="CHEBI:33019"/>
        <dbReference type="ChEBI" id="CHEBI:46398"/>
        <dbReference type="ChEBI" id="CHEBI:57705"/>
        <dbReference type="ChEBI" id="CHEBI:57776"/>
        <dbReference type="EC" id="2.7.7.23"/>
    </reaction>
</comment>
<comment type="cofactor">
    <cofactor evidence="1">
        <name>Mg(2+)</name>
        <dbReference type="ChEBI" id="CHEBI:18420"/>
    </cofactor>
    <text evidence="1">Binds 1 Mg(2+) ion per subunit.</text>
</comment>
<comment type="pathway">
    <text evidence="1">Nucleotide-sugar biosynthesis; UDP-N-acetyl-alpha-D-glucosamine biosynthesis; N-acetyl-alpha-D-glucosamine 1-phosphate from alpha-D-glucosamine 6-phosphate (route II): step 2/2.</text>
</comment>
<comment type="pathway">
    <text evidence="1">Nucleotide-sugar biosynthesis; UDP-N-acetyl-alpha-D-glucosamine biosynthesis; UDP-N-acetyl-alpha-D-glucosamine from N-acetyl-alpha-D-glucosamine 1-phosphate: step 1/1.</text>
</comment>
<comment type="pathway">
    <text evidence="1">Bacterial outer membrane biogenesis; LPS lipid A biosynthesis.</text>
</comment>
<comment type="subunit">
    <text evidence="1">Homotrimer.</text>
</comment>
<comment type="subcellular location">
    <subcellularLocation>
        <location evidence="1">Cytoplasm</location>
    </subcellularLocation>
</comment>
<comment type="similarity">
    <text evidence="1">In the N-terminal section; belongs to the N-acetylglucosamine-1-phosphate uridyltransferase family.</text>
</comment>
<comment type="similarity">
    <text evidence="1">In the C-terminal section; belongs to the transferase hexapeptide repeat family.</text>
</comment>
<organism>
    <name type="scientific">Oleidesulfovibrio alaskensis (strain ATCC BAA-1058 / DSM 17464 / G20)</name>
    <name type="common">Desulfovibrio alaskensis</name>
    <dbReference type="NCBI Taxonomy" id="207559"/>
    <lineage>
        <taxon>Bacteria</taxon>
        <taxon>Pseudomonadati</taxon>
        <taxon>Thermodesulfobacteriota</taxon>
        <taxon>Desulfovibrionia</taxon>
        <taxon>Desulfovibrionales</taxon>
        <taxon>Desulfovibrionaceae</taxon>
        <taxon>Oleidesulfovibrio</taxon>
    </lineage>
</organism>
<feature type="chain" id="PRO_0000233768" description="Bifunctional protein GlmU">
    <location>
        <begin position="1"/>
        <end position="460"/>
    </location>
</feature>
<feature type="region of interest" description="Pyrophosphorylase" evidence="1">
    <location>
        <begin position="1"/>
        <end position="237"/>
    </location>
</feature>
<feature type="region of interest" description="Linker" evidence="1">
    <location>
        <begin position="238"/>
        <end position="258"/>
    </location>
</feature>
<feature type="region of interest" description="N-acetyltransferase" evidence="1">
    <location>
        <begin position="259"/>
        <end position="460"/>
    </location>
</feature>
<feature type="active site" description="Proton acceptor" evidence="1">
    <location>
        <position position="371"/>
    </location>
</feature>
<feature type="binding site" evidence="1">
    <location>
        <begin position="13"/>
        <end position="16"/>
    </location>
    <ligand>
        <name>UDP-N-acetyl-alpha-D-glucosamine</name>
        <dbReference type="ChEBI" id="CHEBI:57705"/>
    </ligand>
</feature>
<feature type="binding site" evidence="1">
    <location>
        <position position="27"/>
    </location>
    <ligand>
        <name>UDP-N-acetyl-alpha-D-glucosamine</name>
        <dbReference type="ChEBI" id="CHEBI:57705"/>
    </ligand>
</feature>
<feature type="binding site" evidence="1">
    <location>
        <position position="78"/>
    </location>
    <ligand>
        <name>UDP-N-acetyl-alpha-D-glucosamine</name>
        <dbReference type="ChEBI" id="CHEBI:57705"/>
    </ligand>
</feature>
<feature type="binding site" evidence="1">
    <location>
        <begin position="83"/>
        <end position="84"/>
    </location>
    <ligand>
        <name>UDP-N-acetyl-alpha-D-glucosamine</name>
        <dbReference type="ChEBI" id="CHEBI:57705"/>
    </ligand>
</feature>
<feature type="binding site" evidence="1">
    <location>
        <position position="109"/>
    </location>
    <ligand>
        <name>Mg(2+)</name>
        <dbReference type="ChEBI" id="CHEBI:18420"/>
    </ligand>
</feature>
<feature type="binding site" evidence="1">
    <location>
        <position position="146"/>
    </location>
    <ligand>
        <name>UDP-N-acetyl-alpha-D-glucosamine</name>
        <dbReference type="ChEBI" id="CHEBI:57705"/>
    </ligand>
</feature>
<feature type="binding site" evidence="1">
    <location>
        <position position="160"/>
    </location>
    <ligand>
        <name>UDP-N-acetyl-alpha-D-glucosamine</name>
        <dbReference type="ChEBI" id="CHEBI:57705"/>
    </ligand>
</feature>
<feature type="binding site" evidence="1">
    <location>
        <position position="177"/>
    </location>
    <ligand>
        <name>UDP-N-acetyl-alpha-D-glucosamine</name>
        <dbReference type="ChEBI" id="CHEBI:57705"/>
    </ligand>
</feature>
<feature type="binding site" evidence="1">
    <location>
        <position position="235"/>
    </location>
    <ligand>
        <name>Mg(2+)</name>
        <dbReference type="ChEBI" id="CHEBI:18420"/>
    </ligand>
</feature>
<feature type="binding site" evidence="1">
    <location>
        <position position="235"/>
    </location>
    <ligand>
        <name>UDP-N-acetyl-alpha-D-glucosamine</name>
        <dbReference type="ChEBI" id="CHEBI:57705"/>
    </ligand>
</feature>
<feature type="binding site" evidence="1">
    <location>
        <position position="341"/>
    </location>
    <ligand>
        <name>UDP-N-acetyl-alpha-D-glucosamine</name>
        <dbReference type="ChEBI" id="CHEBI:57705"/>
    </ligand>
</feature>
<feature type="binding site" evidence="1">
    <location>
        <position position="359"/>
    </location>
    <ligand>
        <name>UDP-N-acetyl-alpha-D-glucosamine</name>
        <dbReference type="ChEBI" id="CHEBI:57705"/>
    </ligand>
</feature>
<feature type="binding site" evidence="1">
    <location>
        <position position="374"/>
    </location>
    <ligand>
        <name>UDP-N-acetyl-alpha-D-glucosamine</name>
        <dbReference type="ChEBI" id="CHEBI:57705"/>
    </ligand>
</feature>
<feature type="binding site" evidence="1">
    <location>
        <position position="385"/>
    </location>
    <ligand>
        <name>UDP-N-acetyl-alpha-D-glucosamine</name>
        <dbReference type="ChEBI" id="CHEBI:57705"/>
    </ligand>
</feature>
<feature type="binding site" evidence="1">
    <location>
        <position position="388"/>
    </location>
    <ligand>
        <name>acetyl-CoA</name>
        <dbReference type="ChEBI" id="CHEBI:57288"/>
    </ligand>
</feature>
<feature type="binding site" evidence="1">
    <location>
        <begin position="394"/>
        <end position="395"/>
    </location>
    <ligand>
        <name>acetyl-CoA</name>
        <dbReference type="ChEBI" id="CHEBI:57288"/>
    </ligand>
</feature>
<feature type="binding site" evidence="1">
    <location>
        <position position="413"/>
    </location>
    <ligand>
        <name>acetyl-CoA</name>
        <dbReference type="ChEBI" id="CHEBI:57288"/>
    </ligand>
</feature>
<feature type="binding site" evidence="1">
    <location>
        <position position="431"/>
    </location>
    <ligand>
        <name>acetyl-CoA</name>
        <dbReference type="ChEBI" id="CHEBI:57288"/>
    </ligand>
</feature>
<feature type="binding site" evidence="1">
    <location>
        <position position="448"/>
    </location>
    <ligand>
        <name>acetyl-CoA</name>
        <dbReference type="ChEBI" id="CHEBI:57288"/>
    </ligand>
</feature>
<proteinExistence type="inferred from homology"/>
<reference key="1">
    <citation type="journal article" date="2011" name="J. Bacteriol.">
        <title>Complete genome sequence and updated annotation of Desulfovibrio alaskensis G20.</title>
        <authorList>
            <person name="Hauser L.J."/>
            <person name="Land M.L."/>
            <person name="Brown S.D."/>
            <person name="Larimer F."/>
            <person name="Keller K.L."/>
            <person name="Rapp-Giles B.J."/>
            <person name="Price M.N."/>
            <person name="Lin M."/>
            <person name="Bruce D.C."/>
            <person name="Detter J.C."/>
            <person name="Tapia R."/>
            <person name="Han C.S."/>
            <person name="Goodwin L.A."/>
            <person name="Cheng J.F."/>
            <person name="Pitluck S."/>
            <person name="Copeland A."/>
            <person name="Lucas S."/>
            <person name="Nolan M."/>
            <person name="Lapidus A.L."/>
            <person name="Palumbo A.V."/>
            <person name="Wall J.D."/>
        </authorList>
    </citation>
    <scope>NUCLEOTIDE SEQUENCE [LARGE SCALE GENOMIC DNA]</scope>
    <source>
        <strain>ATCC BAA-1058 / DSM 17464 / G20</strain>
    </source>
</reference>
<sequence>MSSNQYTAGAVILAAGKGTRMYSDKPKVLQPLLGEPMLRFVYRALDPLFSKAVWTVIGHGADMVRKAFCHEDREFVLQEKQLGTGHALQCAWDKVTASGIDYVLVINGDTPLVRPDSIVRLLDRTAGSGADVGFITLTLEDPAAFGRVVRRHGHVAAVIEAKDYDTAQHGPEPREINAGIYLLKVAAVSPLLPLLTNANASGEYYITDIVELAVRQGLRVEGVECGNDPDLLGVNTPAELMRSEELLRENIVTRHLHNGVHVHAAGSVRIGPDVVIEPGAVIHGPCELYGNTFVGAQAVIDSHCWVKDSRLHPGSTLRNFSHAEQAEIATGAVAGPYARLRPGAVLEQDARMGNFVEMKKAVLRKGAKASHLTYLGDADIGSEANIGAGTITCNYDGVNKHRTVIGEKAFIGSNTALVAPVSIGKQALVGAGSVITKDVEDGELAIARGRQKNLRKTRHS</sequence>
<keyword id="KW-0012">Acyltransferase</keyword>
<keyword id="KW-0133">Cell shape</keyword>
<keyword id="KW-0961">Cell wall biogenesis/degradation</keyword>
<keyword id="KW-0963">Cytoplasm</keyword>
<keyword id="KW-0460">Magnesium</keyword>
<keyword id="KW-0479">Metal-binding</keyword>
<keyword id="KW-0511">Multifunctional enzyme</keyword>
<keyword id="KW-0548">Nucleotidyltransferase</keyword>
<keyword id="KW-0573">Peptidoglycan synthesis</keyword>
<keyword id="KW-1185">Reference proteome</keyword>
<keyword id="KW-0677">Repeat</keyword>
<keyword id="KW-0808">Transferase</keyword>